<feature type="chain" id="PRO_1000187447" description="2,3,4,5-tetrahydropyridine-2,6-dicarboxylate N-acetyltransferase">
    <location>
        <begin position="1"/>
        <end position="240"/>
    </location>
</feature>
<reference key="1">
    <citation type="submission" date="2009-04" db="EMBL/GenBank/DDBJ databases">
        <title>Genome sequence of Bacillus anthracis A0248.</title>
        <authorList>
            <person name="Dodson R.J."/>
            <person name="Munk A.C."/>
            <person name="Bruce D."/>
            <person name="Detter C."/>
            <person name="Tapia R."/>
            <person name="Sutton G."/>
            <person name="Sims D."/>
            <person name="Brettin T."/>
        </authorList>
    </citation>
    <scope>NUCLEOTIDE SEQUENCE [LARGE SCALE GENOMIC DNA]</scope>
    <source>
        <strain>A0248</strain>
    </source>
</reference>
<organism>
    <name type="scientific">Bacillus anthracis (strain A0248)</name>
    <dbReference type="NCBI Taxonomy" id="592021"/>
    <lineage>
        <taxon>Bacteria</taxon>
        <taxon>Bacillati</taxon>
        <taxon>Bacillota</taxon>
        <taxon>Bacilli</taxon>
        <taxon>Bacillales</taxon>
        <taxon>Bacillaceae</taxon>
        <taxon>Bacillus</taxon>
        <taxon>Bacillus cereus group</taxon>
    </lineage>
</organism>
<sequence>MKMMDANEIISFIQKSEKKTPVKVYIKGDLKEVTFPETVQAFVNKKSGVLFGEWSEIKTILDENSKYIVDYVVENDRRNSAIPMLDLKGIKARIEPGAIIRDHVEIGDNAVIMMNATINIGAVIGEGSMIDMNAVLGGRATVGKNCHVGAGAVLAGVIEPPSAKPVIVEDDVVIGANVVVLEGVTVGKGAVVAAGAVVTEDVPPYTVVAGTPARVIKEIDEKTKAKTEIKQELRQLNPEK</sequence>
<name>DAPH_BACAA</name>
<accession>C3P6Y8</accession>
<gene>
    <name evidence="1" type="primary">dapH</name>
    <name type="ordered locus">BAA_4216</name>
</gene>
<evidence type="ECO:0000255" key="1">
    <source>
        <dbReference type="HAMAP-Rule" id="MF_01691"/>
    </source>
</evidence>
<proteinExistence type="inferred from homology"/>
<comment type="function">
    <text evidence="1">Catalyzes the transfer of an acetyl group from acetyl-CoA to tetrahydrodipicolinate.</text>
</comment>
<comment type="catalytic activity">
    <reaction evidence="1">
        <text>(S)-2,3,4,5-tetrahydrodipicolinate + acetyl-CoA + H2O = L-2-acetamido-6-oxoheptanedioate + CoA</text>
        <dbReference type="Rhea" id="RHEA:13085"/>
        <dbReference type="ChEBI" id="CHEBI:15377"/>
        <dbReference type="ChEBI" id="CHEBI:16845"/>
        <dbReference type="ChEBI" id="CHEBI:57287"/>
        <dbReference type="ChEBI" id="CHEBI:57288"/>
        <dbReference type="ChEBI" id="CHEBI:58117"/>
        <dbReference type="EC" id="2.3.1.89"/>
    </reaction>
</comment>
<comment type="pathway">
    <text evidence="1">Amino-acid biosynthesis; L-lysine biosynthesis via DAP pathway; LL-2,6-diaminopimelate from (S)-tetrahydrodipicolinate (acetylase route): step 1/3.</text>
</comment>
<comment type="similarity">
    <text evidence="1">Belongs to the transferase hexapeptide repeat family. DapH subfamily.</text>
</comment>
<protein>
    <recommendedName>
        <fullName evidence="1">2,3,4,5-tetrahydropyridine-2,6-dicarboxylate N-acetyltransferase</fullName>
        <ecNumber evidence="1">2.3.1.89</ecNumber>
    </recommendedName>
    <alternativeName>
        <fullName evidence="1">Tetrahydrodipicolinate N-acetyltransferase</fullName>
        <shortName evidence="1">THP acetyltransferase</shortName>
        <shortName evidence="1">Tetrahydropicolinate acetylase</shortName>
    </alternativeName>
</protein>
<dbReference type="EC" id="2.3.1.89" evidence="1"/>
<dbReference type="EMBL" id="CP001598">
    <property type="protein sequence ID" value="ACQ49093.1"/>
    <property type="molecule type" value="Genomic_DNA"/>
</dbReference>
<dbReference type="SMR" id="C3P6Y8"/>
<dbReference type="KEGG" id="bai:BAA_4216"/>
<dbReference type="HOGENOM" id="CLU_103751_0_0_9"/>
<dbReference type="UniPathway" id="UPA00034">
    <property type="reaction ID" value="UER00022"/>
</dbReference>
<dbReference type="GO" id="GO:0047200">
    <property type="term" value="F:tetrahydrodipicolinate N-acetyltransferase activity"/>
    <property type="evidence" value="ECO:0007669"/>
    <property type="project" value="UniProtKB-EC"/>
</dbReference>
<dbReference type="GO" id="GO:0019877">
    <property type="term" value="P:diaminopimelate biosynthetic process"/>
    <property type="evidence" value="ECO:0007669"/>
    <property type="project" value="UniProtKB-UniRule"/>
</dbReference>
<dbReference type="GO" id="GO:0009089">
    <property type="term" value="P:lysine biosynthetic process via diaminopimelate"/>
    <property type="evidence" value="ECO:0007669"/>
    <property type="project" value="UniProtKB-UniRule"/>
</dbReference>
<dbReference type="CDD" id="cd03350">
    <property type="entry name" value="LbH_THP_succinylT"/>
    <property type="match status" value="1"/>
</dbReference>
<dbReference type="Gene3D" id="2.160.10.10">
    <property type="entry name" value="Hexapeptide repeat proteins"/>
    <property type="match status" value="1"/>
</dbReference>
<dbReference type="Gene3D" id="3.30.70.250">
    <property type="entry name" value="Malonyl-CoA ACP transacylase, ACP-binding"/>
    <property type="match status" value="1"/>
</dbReference>
<dbReference type="HAMAP" id="MF_01691">
    <property type="entry name" value="DapH"/>
    <property type="match status" value="1"/>
</dbReference>
<dbReference type="InterPro" id="IPR019873">
    <property type="entry name" value="DapH"/>
</dbReference>
<dbReference type="InterPro" id="IPR013710">
    <property type="entry name" value="DapH_N"/>
</dbReference>
<dbReference type="InterPro" id="IPR001451">
    <property type="entry name" value="Hexapep"/>
</dbReference>
<dbReference type="InterPro" id="IPR018357">
    <property type="entry name" value="Hexapep_transf_CS"/>
</dbReference>
<dbReference type="InterPro" id="IPR050179">
    <property type="entry name" value="Trans_hexapeptide_repeat"/>
</dbReference>
<dbReference type="InterPro" id="IPR011004">
    <property type="entry name" value="Trimer_LpxA-like_sf"/>
</dbReference>
<dbReference type="NCBIfam" id="TIGR03532">
    <property type="entry name" value="DapD_Ac"/>
    <property type="match status" value="1"/>
</dbReference>
<dbReference type="PANTHER" id="PTHR43300:SF10">
    <property type="entry name" value="2,3,4,5-TETRAHYDROPYRIDINE-2,6-DICARBOXYLATE N-ACETYLTRANSFERASE"/>
    <property type="match status" value="1"/>
</dbReference>
<dbReference type="PANTHER" id="PTHR43300">
    <property type="entry name" value="ACETYLTRANSFERASE"/>
    <property type="match status" value="1"/>
</dbReference>
<dbReference type="Pfam" id="PF08503">
    <property type="entry name" value="DapH_N"/>
    <property type="match status" value="1"/>
</dbReference>
<dbReference type="Pfam" id="PF00132">
    <property type="entry name" value="Hexapep"/>
    <property type="match status" value="1"/>
</dbReference>
<dbReference type="Pfam" id="PF14602">
    <property type="entry name" value="Hexapep_2"/>
    <property type="match status" value="1"/>
</dbReference>
<dbReference type="SUPFAM" id="SSF51161">
    <property type="entry name" value="Trimeric LpxA-like enzymes"/>
    <property type="match status" value="1"/>
</dbReference>
<dbReference type="PROSITE" id="PS00101">
    <property type="entry name" value="HEXAPEP_TRANSFERASES"/>
    <property type="match status" value="1"/>
</dbReference>
<keyword id="KW-0012">Acyltransferase</keyword>
<keyword id="KW-0028">Amino-acid biosynthesis</keyword>
<keyword id="KW-0220">Diaminopimelate biosynthesis</keyword>
<keyword id="KW-0457">Lysine biosynthesis</keyword>
<keyword id="KW-0677">Repeat</keyword>
<keyword id="KW-0808">Transferase</keyword>